<proteinExistence type="inferred from homology"/>
<sequence>MHRMFGTDGVRGIANKELTPELAYKLGKAGAYVLTGRCHKPKILVGMDTRISGDMLENALVSGILSIGAEAICVGIVPTPAVAYLTRKYNADAGVVISASHNPVEYNGIKFFNGKGYKLSDELEDKIQYVIESNFKDVSIPIGSKVGRKIMETGEARKAYIEFAKSTIDTDLKDLKVVLDCANGASYVTSVKAFQELGAKVKVINNEPDGININHNCGSTHPENLMKTVVEEGYDMGLAFDGDADRCLAIDEKGNLINGDFIMAIIAKHLKNQGKLYKNVVVSTVMSNVGFDIALKEEGINTIKTQVGDRYVLEEMRKEGYKLGGEQSGHIIMLDYNTTGDGLITALQIACIVKKSGRKLSDIASMMKNLPQTLVNAKVPDDKKKIYMEDEEIVLKIKEIERKLHGCGRVLIRPSGTEPLVRVMLEGEEQGEIDKMAHNLAELIEVKLN</sequence>
<reference key="1">
    <citation type="journal article" date="2008" name="Proc. Natl. Acad. Sci. U.S.A.">
        <title>The genome of Clostridium kluyveri, a strict anaerobe with unique metabolic features.</title>
        <authorList>
            <person name="Seedorf H."/>
            <person name="Fricke W.F."/>
            <person name="Veith B."/>
            <person name="Brueggemann H."/>
            <person name="Liesegang H."/>
            <person name="Strittmatter A."/>
            <person name="Miethke M."/>
            <person name="Buckel W."/>
            <person name="Hinderberger J."/>
            <person name="Li F."/>
            <person name="Hagemeier C."/>
            <person name="Thauer R.K."/>
            <person name="Gottschalk G."/>
        </authorList>
    </citation>
    <scope>NUCLEOTIDE SEQUENCE [LARGE SCALE GENOMIC DNA]</scope>
    <source>
        <strain>ATCC 8527 / DSM 555 / NBRC 12016 / NCIMB 10680 / K1</strain>
    </source>
</reference>
<keyword id="KW-0413">Isomerase</keyword>
<keyword id="KW-0460">Magnesium</keyword>
<keyword id="KW-0479">Metal-binding</keyword>
<keyword id="KW-0597">Phosphoprotein</keyword>
<keyword id="KW-1185">Reference proteome</keyword>
<gene>
    <name evidence="1" type="primary">glmM</name>
    <name type="ordered locus">CKL_0316</name>
</gene>
<accession>A5N4Y9</accession>
<feature type="chain" id="PRO_1000087762" description="Phosphoglucosamine mutase">
    <location>
        <begin position="1"/>
        <end position="449"/>
    </location>
</feature>
<feature type="active site" description="Phosphoserine intermediate" evidence="1">
    <location>
        <position position="100"/>
    </location>
</feature>
<feature type="binding site" description="via phosphate group" evidence="1">
    <location>
        <position position="100"/>
    </location>
    <ligand>
        <name>Mg(2+)</name>
        <dbReference type="ChEBI" id="CHEBI:18420"/>
    </ligand>
</feature>
<feature type="binding site" evidence="1">
    <location>
        <position position="241"/>
    </location>
    <ligand>
        <name>Mg(2+)</name>
        <dbReference type="ChEBI" id="CHEBI:18420"/>
    </ligand>
</feature>
<feature type="binding site" evidence="1">
    <location>
        <position position="243"/>
    </location>
    <ligand>
        <name>Mg(2+)</name>
        <dbReference type="ChEBI" id="CHEBI:18420"/>
    </ligand>
</feature>
<feature type="binding site" evidence="1">
    <location>
        <position position="245"/>
    </location>
    <ligand>
        <name>Mg(2+)</name>
        <dbReference type="ChEBI" id="CHEBI:18420"/>
    </ligand>
</feature>
<feature type="modified residue" description="Phosphoserine" evidence="1">
    <location>
        <position position="100"/>
    </location>
</feature>
<organism>
    <name type="scientific">Clostridium kluyveri (strain ATCC 8527 / DSM 555 / NBRC 12016 / NCIMB 10680 / K1)</name>
    <dbReference type="NCBI Taxonomy" id="431943"/>
    <lineage>
        <taxon>Bacteria</taxon>
        <taxon>Bacillati</taxon>
        <taxon>Bacillota</taxon>
        <taxon>Clostridia</taxon>
        <taxon>Eubacteriales</taxon>
        <taxon>Clostridiaceae</taxon>
        <taxon>Clostridium</taxon>
    </lineage>
</organism>
<name>GLMM_CLOK5</name>
<protein>
    <recommendedName>
        <fullName evidence="1">Phosphoglucosamine mutase</fullName>
        <ecNumber evidence="1">5.4.2.10</ecNumber>
    </recommendedName>
</protein>
<evidence type="ECO:0000255" key="1">
    <source>
        <dbReference type="HAMAP-Rule" id="MF_01554"/>
    </source>
</evidence>
<dbReference type="EC" id="5.4.2.10" evidence="1"/>
<dbReference type="EMBL" id="CP000673">
    <property type="protein sequence ID" value="EDK32370.1"/>
    <property type="molecule type" value="Genomic_DNA"/>
</dbReference>
<dbReference type="RefSeq" id="WP_011988885.1">
    <property type="nucleotide sequence ID" value="NC_009706.1"/>
</dbReference>
<dbReference type="SMR" id="A5N4Y9"/>
<dbReference type="STRING" id="431943.CKL_0316"/>
<dbReference type="KEGG" id="ckl:CKL_0316"/>
<dbReference type="eggNOG" id="COG1109">
    <property type="taxonomic scope" value="Bacteria"/>
</dbReference>
<dbReference type="HOGENOM" id="CLU_016950_7_0_9"/>
<dbReference type="Proteomes" id="UP000002411">
    <property type="component" value="Chromosome"/>
</dbReference>
<dbReference type="GO" id="GO:0005829">
    <property type="term" value="C:cytosol"/>
    <property type="evidence" value="ECO:0007669"/>
    <property type="project" value="TreeGrafter"/>
</dbReference>
<dbReference type="GO" id="GO:0000287">
    <property type="term" value="F:magnesium ion binding"/>
    <property type="evidence" value="ECO:0007669"/>
    <property type="project" value="UniProtKB-UniRule"/>
</dbReference>
<dbReference type="GO" id="GO:0008966">
    <property type="term" value="F:phosphoglucosamine mutase activity"/>
    <property type="evidence" value="ECO:0007669"/>
    <property type="project" value="UniProtKB-UniRule"/>
</dbReference>
<dbReference type="GO" id="GO:0004615">
    <property type="term" value="F:phosphomannomutase activity"/>
    <property type="evidence" value="ECO:0007669"/>
    <property type="project" value="TreeGrafter"/>
</dbReference>
<dbReference type="GO" id="GO:0005975">
    <property type="term" value="P:carbohydrate metabolic process"/>
    <property type="evidence" value="ECO:0007669"/>
    <property type="project" value="InterPro"/>
</dbReference>
<dbReference type="GO" id="GO:0009252">
    <property type="term" value="P:peptidoglycan biosynthetic process"/>
    <property type="evidence" value="ECO:0007669"/>
    <property type="project" value="TreeGrafter"/>
</dbReference>
<dbReference type="GO" id="GO:0006048">
    <property type="term" value="P:UDP-N-acetylglucosamine biosynthetic process"/>
    <property type="evidence" value="ECO:0007669"/>
    <property type="project" value="TreeGrafter"/>
</dbReference>
<dbReference type="CDD" id="cd05802">
    <property type="entry name" value="GlmM"/>
    <property type="match status" value="1"/>
</dbReference>
<dbReference type="FunFam" id="3.30.310.50:FF:000001">
    <property type="entry name" value="Phosphoglucosamine mutase"/>
    <property type="match status" value="1"/>
</dbReference>
<dbReference type="FunFam" id="3.40.120.10:FF:000001">
    <property type="entry name" value="Phosphoglucosamine mutase"/>
    <property type="match status" value="1"/>
</dbReference>
<dbReference type="FunFam" id="3.40.120.10:FF:000002">
    <property type="entry name" value="Phosphoglucosamine mutase"/>
    <property type="match status" value="1"/>
</dbReference>
<dbReference type="Gene3D" id="3.40.120.10">
    <property type="entry name" value="Alpha-D-Glucose-1,6-Bisphosphate, subunit A, domain 3"/>
    <property type="match status" value="3"/>
</dbReference>
<dbReference type="Gene3D" id="3.30.310.50">
    <property type="entry name" value="Alpha-D-phosphohexomutase, C-terminal domain"/>
    <property type="match status" value="1"/>
</dbReference>
<dbReference type="HAMAP" id="MF_01554_B">
    <property type="entry name" value="GlmM_B"/>
    <property type="match status" value="1"/>
</dbReference>
<dbReference type="InterPro" id="IPR005844">
    <property type="entry name" value="A-D-PHexomutase_a/b/a-I"/>
</dbReference>
<dbReference type="InterPro" id="IPR016055">
    <property type="entry name" value="A-D-PHexomutase_a/b/a-I/II/III"/>
</dbReference>
<dbReference type="InterPro" id="IPR005845">
    <property type="entry name" value="A-D-PHexomutase_a/b/a-II"/>
</dbReference>
<dbReference type="InterPro" id="IPR005846">
    <property type="entry name" value="A-D-PHexomutase_a/b/a-III"/>
</dbReference>
<dbReference type="InterPro" id="IPR005843">
    <property type="entry name" value="A-D-PHexomutase_C"/>
</dbReference>
<dbReference type="InterPro" id="IPR036900">
    <property type="entry name" value="A-D-PHexomutase_C_sf"/>
</dbReference>
<dbReference type="InterPro" id="IPR016066">
    <property type="entry name" value="A-D-PHexomutase_CS"/>
</dbReference>
<dbReference type="InterPro" id="IPR005841">
    <property type="entry name" value="Alpha-D-phosphohexomutase_SF"/>
</dbReference>
<dbReference type="InterPro" id="IPR006352">
    <property type="entry name" value="GlmM_bact"/>
</dbReference>
<dbReference type="InterPro" id="IPR050060">
    <property type="entry name" value="Phosphoglucosamine_mutase"/>
</dbReference>
<dbReference type="NCBIfam" id="TIGR01455">
    <property type="entry name" value="glmM"/>
    <property type="match status" value="1"/>
</dbReference>
<dbReference type="NCBIfam" id="NF008139">
    <property type="entry name" value="PRK10887.1"/>
    <property type="match status" value="1"/>
</dbReference>
<dbReference type="PANTHER" id="PTHR42946:SF1">
    <property type="entry name" value="PHOSPHOGLUCOMUTASE (ALPHA-D-GLUCOSE-1,6-BISPHOSPHATE-DEPENDENT)"/>
    <property type="match status" value="1"/>
</dbReference>
<dbReference type="PANTHER" id="PTHR42946">
    <property type="entry name" value="PHOSPHOHEXOSE MUTASE"/>
    <property type="match status" value="1"/>
</dbReference>
<dbReference type="Pfam" id="PF02878">
    <property type="entry name" value="PGM_PMM_I"/>
    <property type="match status" value="1"/>
</dbReference>
<dbReference type="Pfam" id="PF02879">
    <property type="entry name" value="PGM_PMM_II"/>
    <property type="match status" value="1"/>
</dbReference>
<dbReference type="Pfam" id="PF02880">
    <property type="entry name" value="PGM_PMM_III"/>
    <property type="match status" value="1"/>
</dbReference>
<dbReference type="Pfam" id="PF00408">
    <property type="entry name" value="PGM_PMM_IV"/>
    <property type="match status" value="1"/>
</dbReference>
<dbReference type="PRINTS" id="PR00509">
    <property type="entry name" value="PGMPMM"/>
</dbReference>
<dbReference type="SUPFAM" id="SSF55957">
    <property type="entry name" value="Phosphoglucomutase, C-terminal domain"/>
    <property type="match status" value="1"/>
</dbReference>
<dbReference type="SUPFAM" id="SSF53738">
    <property type="entry name" value="Phosphoglucomutase, first 3 domains"/>
    <property type="match status" value="3"/>
</dbReference>
<dbReference type="PROSITE" id="PS00710">
    <property type="entry name" value="PGM_PMM"/>
    <property type="match status" value="1"/>
</dbReference>
<comment type="function">
    <text evidence="1">Catalyzes the conversion of glucosamine-6-phosphate to glucosamine-1-phosphate.</text>
</comment>
<comment type="catalytic activity">
    <reaction evidence="1">
        <text>alpha-D-glucosamine 1-phosphate = D-glucosamine 6-phosphate</text>
        <dbReference type="Rhea" id="RHEA:23424"/>
        <dbReference type="ChEBI" id="CHEBI:58516"/>
        <dbReference type="ChEBI" id="CHEBI:58725"/>
        <dbReference type="EC" id="5.4.2.10"/>
    </reaction>
</comment>
<comment type="cofactor">
    <cofactor evidence="1">
        <name>Mg(2+)</name>
        <dbReference type="ChEBI" id="CHEBI:18420"/>
    </cofactor>
    <text evidence="1">Binds 1 Mg(2+) ion per subunit.</text>
</comment>
<comment type="PTM">
    <text evidence="1">Activated by phosphorylation.</text>
</comment>
<comment type="similarity">
    <text evidence="1">Belongs to the phosphohexose mutase family.</text>
</comment>